<reference key="1">
    <citation type="submission" date="2005-10" db="EMBL/GenBank/DDBJ databases">
        <authorList>
            <consortium name="NIH - Mammalian Gene Collection (MGC) project"/>
        </authorList>
    </citation>
    <scope>NUCLEOTIDE SEQUENCE [LARGE SCALE MRNA]</scope>
    <source>
        <strain>Crossbred X Angus</strain>
        <tissue>Liver</tissue>
    </source>
</reference>
<dbReference type="EMBL" id="BC108142">
    <property type="protein sequence ID" value="AAI08143.1"/>
    <property type="molecule type" value="mRNA"/>
</dbReference>
<dbReference type="RefSeq" id="NP_001032564.1">
    <property type="nucleotide sequence ID" value="NM_001037487.2"/>
</dbReference>
<dbReference type="SMR" id="Q32PE9"/>
<dbReference type="FunCoup" id="Q32PE9">
    <property type="interactions" value="2329"/>
</dbReference>
<dbReference type="STRING" id="9913.ENSBTAP00000009684"/>
<dbReference type="PaxDb" id="9913-ENSBTAP00000009684"/>
<dbReference type="Ensembl" id="ENSBTAT00000009684.5">
    <property type="protein sequence ID" value="ENSBTAP00000009684.5"/>
    <property type="gene ID" value="ENSBTAG00000007363.5"/>
</dbReference>
<dbReference type="GeneID" id="614759"/>
<dbReference type="KEGG" id="bta:614759"/>
<dbReference type="CTD" id="27258"/>
<dbReference type="VGNC" id="VGNC:31055">
    <property type="gene designation" value="LSM3"/>
</dbReference>
<dbReference type="eggNOG" id="KOG3460">
    <property type="taxonomic scope" value="Eukaryota"/>
</dbReference>
<dbReference type="GeneTree" id="ENSGT00390000013951"/>
<dbReference type="HOGENOM" id="CLU_076902_5_1_1"/>
<dbReference type="InParanoid" id="Q32PE9"/>
<dbReference type="OrthoDB" id="29543at2759"/>
<dbReference type="TreeFam" id="TF312907"/>
<dbReference type="Proteomes" id="UP000009136">
    <property type="component" value="Chromosome 22"/>
</dbReference>
<dbReference type="GO" id="GO:0071013">
    <property type="term" value="C:catalytic step 2 spliceosome"/>
    <property type="evidence" value="ECO:0000318"/>
    <property type="project" value="GO_Central"/>
</dbReference>
<dbReference type="GO" id="GO:1990726">
    <property type="term" value="C:Lsm1-7-Pat1 complex"/>
    <property type="evidence" value="ECO:0000318"/>
    <property type="project" value="GO_Central"/>
</dbReference>
<dbReference type="GO" id="GO:0120115">
    <property type="term" value="C:Lsm2-8 complex"/>
    <property type="evidence" value="ECO:0000250"/>
    <property type="project" value="UniProtKB"/>
</dbReference>
<dbReference type="GO" id="GO:0005634">
    <property type="term" value="C:nucleus"/>
    <property type="evidence" value="ECO:0000250"/>
    <property type="project" value="UniProtKB"/>
</dbReference>
<dbReference type="GO" id="GO:0000932">
    <property type="term" value="C:P-body"/>
    <property type="evidence" value="ECO:0000318"/>
    <property type="project" value="GO_Central"/>
</dbReference>
<dbReference type="GO" id="GO:0071011">
    <property type="term" value="C:precatalytic spliceosome"/>
    <property type="evidence" value="ECO:0000318"/>
    <property type="project" value="GO_Central"/>
</dbReference>
<dbReference type="GO" id="GO:0071005">
    <property type="term" value="C:U2-type precatalytic spliceosome"/>
    <property type="evidence" value="ECO:0000250"/>
    <property type="project" value="UniProtKB"/>
</dbReference>
<dbReference type="GO" id="GO:0046540">
    <property type="term" value="C:U4/U6 x U5 tri-snRNP complex"/>
    <property type="evidence" value="ECO:0000250"/>
    <property type="project" value="UniProtKB"/>
</dbReference>
<dbReference type="GO" id="GO:0005688">
    <property type="term" value="C:U6 snRNP"/>
    <property type="evidence" value="ECO:0000318"/>
    <property type="project" value="GO_Central"/>
</dbReference>
<dbReference type="GO" id="GO:0003723">
    <property type="term" value="F:RNA binding"/>
    <property type="evidence" value="ECO:0000318"/>
    <property type="project" value="GO_Central"/>
</dbReference>
<dbReference type="GO" id="GO:0000398">
    <property type="term" value="P:mRNA splicing, via spliceosome"/>
    <property type="evidence" value="ECO:0000250"/>
    <property type="project" value="UniProtKB"/>
</dbReference>
<dbReference type="GO" id="GO:0033962">
    <property type="term" value="P:P-body assembly"/>
    <property type="evidence" value="ECO:0000318"/>
    <property type="project" value="GO_Central"/>
</dbReference>
<dbReference type="CDD" id="cd01730">
    <property type="entry name" value="LSm3"/>
    <property type="match status" value="1"/>
</dbReference>
<dbReference type="FunFam" id="2.30.30.100:FF:000007">
    <property type="entry name" value="U6 snRNA-associated Sm-like protein LSm3"/>
    <property type="match status" value="1"/>
</dbReference>
<dbReference type="Gene3D" id="2.30.30.100">
    <property type="match status" value="1"/>
</dbReference>
<dbReference type="InterPro" id="IPR034105">
    <property type="entry name" value="Lsm3"/>
</dbReference>
<dbReference type="InterPro" id="IPR010920">
    <property type="entry name" value="LSM_dom_sf"/>
</dbReference>
<dbReference type="InterPro" id="IPR047575">
    <property type="entry name" value="Sm"/>
</dbReference>
<dbReference type="InterPro" id="IPR040002">
    <property type="entry name" value="Sm-like_LSM3"/>
</dbReference>
<dbReference type="InterPro" id="IPR001163">
    <property type="entry name" value="Sm_dom_euk/arc"/>
</dbReference>
<dbReference type="PANTHER" id="PTHR13110">
    <property type="entry name" value="U6 SNRNA-ASSOCIATED SM-LIKE PROTEIN LSM3"/>
    <property type="match status" value="1"/>
</dbReference>
<dbReference type="Pfam" id="PF01423">
    <property type="entry name" value="LSM"/>
    <property type="match status" value="1"/>
</dbReference>
<dbReference type="SMART" id="SM00651">
    <property type="entry name" value="Sm"/>
    <property type="match status" value="1"/>
</dbReference>
<dbReference type="SUPFAM" id="SSF50182">
    <property type="entry name" value="Sm-like ribonucleoproteins"/>
    <property type="match status" value="1"/>
</dbReference>
<dbReference type="PROSITE" id="PS52002">
    <property type="entry name" value="SM"/>
    <property type="match status" value="1"/>
</dbReference>
<proteinExistence type="inferred from homology"/>
<evidence type="ECO:0000250" key="1">
    <source>
        <dbReference type="UniProtKB" id="P62310"/>
    </source>
</evidence>
<evidence type="ECO:0000255" key="2">
    <source>
        <dbReference type="PROSITE-ProRule" id="PRU01346"/>
    </source>
</evidence>
<evidence type="ECO:0000305" key="3"/>
<feature type="initiator methionine" description="Removed" evidence="1">
    <location>
        <position position="1"/>
    </location>
</feature>
<feature type="chain" id="PRO_0000249876" description="U6 snRNA-associated Sm-like protein LSm3">
    <location>
        <begin position="2"/>
        <end position="102"/>
    </location>
</feature>
<feature type="domain" description="Sm" evidence="2">
    <location>
        <begin position="16"/>
        <end position="101"/>
    </location>
</feature>
<feature type="modified residue" description="N-acetylalanine" evidence="1">
    <location>
        <position position="2"/>
    </location>
</feature>
<gene>
    <name type="primary">LSM3</name>
</gene>
<organism>
    <name type="scientific">Bos taurus</name>
    <name type="common">Bovine</name>
    <dbReference type="NCBI Taxonomy" id="9913"/>
    <lineage>
        <taxon>Eukaryota</taxon>
        <taxon>Metazoa</taxon>
        <taxon>Chordata</taxon>
        <taxon>Craniata</taxon>
        <taxon>Vertebrata</taxon>
        <taxon>Euteleostomi</taxon>
        <taxon>Mammalia</taxon>
        <taxon>Eutheria</taxon>
        <taxon>Laurasiatheria</taxon>
        <taxon>Artiodactyla</taxon>
        <taxon>Ruminantia</taxon>
        <taxon>Pecora</taxon>
        <taxon>Bovidae</taxon>
        <taxon>Bovinae</taxon>
        <taxon>Bos</taxon>
    </lineage>
</organism>
<sequence length="102" mass="11845">MADDVDQQQTTNTVEEPLDLIRLSLDERIYVKMRNDRELRGRLHAYDQHLNMILGDVEETVTTIEIDEETYEEIYKSTKRNIPMLFVRGDGVVLVAPPLRVG</sequence>
<accession>Q32PE9</accession>
<name>LSM3_BOVIN</name>
<comment type="function">
    <text evidence="1">Plays a role in pre-mRNA splicing as component of the U4/U6-U5 tri-snRNP complex that is involved in spliceosome assembly, and as component of the precatalytic spliceosome (spliceosome B complex). The heptameric LSM2-8 complex binds specifically to the 3'-terminal U-tract of U6 snRNA.</text>
</comment>
<comment type="subunit">
    <text evidence="1">Component of the precatalytic spliceosome (spliceosome B complex). Component of the U4/U6-U5 tri-snRNP complex, a building block of the precatalytic spliceosome (spliceosome B complex). The U4/U6-U5 tri-snRNP complex is composed of the U4, U6 and U5 snRNAs and at least PRPF3, PRPF4, PRPF6, PRPF8, PRPF31, SNRNP200, TXNL4A, SNRNP40, SNRPB, SNRPD1, SNRPD2, SNRPD3, SNRPE, SNRPF, SNRPG, DDX23, CD2BP2, PPIH, SNU13, EFTUD2, SART1 and USP39, plus LSM2, LSM3, LSM4, LSM5, LSM6, LSM7 and LSM8. LSM2, LSM3, LSM4, LSM5, LSM6, LSM7 and LSM8 form a heptameric, ring-shaped subcomplex (the LSM2-8 complex) that is part of the U4/U6-U5 tri-snRNP complex and the precatalytic spliceosome.</text>
</comment>
<comment type="subcellular location">
    <subcellularLocation>
        <location evidence="1">Nucleus</location>
    </subcellularLocation>
</comment>
<comment type="similarity">
    <text evidence="3">Belongs to the snRNP Sm proteins family.</text>
</comment>
<protein>
    <recommendedName>
        <fullName>U6 snRNA-associated Sm-like protein LSm3</fullName>
    </recommendedName>
</protein>
<keyword id="KW-0007">Acetylation</keyword>
<keyword id="KW-0507">mRNA processing</keyword>
<keyword id="KW-0508">mRNA splicing</keyword>
<keyword id="KW-0539">Nucleus</keyword>
<keyword id="KW-1185">Reference proteome</keyword>
<keyword id="KW-0687">Ribonucleoprotein</keyword>
<keyword id="KW-0694">RNA-binding</keyword>
<keyword id="KW-0747">Spliceosome</keyword>